<feature type="chain" id="PRO_0000235391" description="Holliday junction branch migration complex subunit RuvB">
    <location>
        <begin position="1"/>
        <end position="352"/>
    </location>
</feature>
<feature type="region of interest" description="Large ATPase domain (RuvB-L)" evidence="1">
    <location>
        <begin position="4"/>
        <end position="185"/>
    </location>
</feature>
<feature type="region of interest" description="Small ATPAse domain (RuvB-S)" evidence="1">
    <location>
        <begin position="186"/>
        <end position="256"/>
    </location>
</feature>
<feature type="region of interest" description="Head domain (RuvB-H)" evidence="1">
    <location>
        <begin position="259"/>
        <end position="352"/>
    </location>
</feature>
<feature type="binding site" evidence="1">
    <location>
        <position position="24"/>
    </location>
    <ligand>
        <name>ATP</name>
        <dbReference type="ChEBI" id="CHEBI:30616"/>
    </ligand>
</feature>
<feature type="binding site" evidence="1">
    <location>
        <position position="25"/>
    </location>
    <ligand>
        <name>ATP</name>
        <dbReference type="ChEBI" id="CHEBI:30616"/>
    </ligand>
</feature>
<feature type="binding site" evidence="1">
    <location>
        <position position="66"/>
    </location>
    <ligand>
        <name>ATP</name>
        <dbReference type="ChEBI" id="CHEBI:30616"/>
    </ligand>
</feature>
<feature type="binding site" evidence="1">
    <location>
        <position position="69"/>
    </location>
    <ligand>
        <name>ATP</name>
        <dbReference type="ChEBI" id="CHEBI:30616"/>
    </ligand>
</feature>
<feature type="binding site" evidence="1">
    <location>
        <position position="70"/>
    </location>
    <ligand>
        <name>ATP</name>
        <dbReference type="ChEBI" id="CHEBI:30616"/>
    </ligand>
</feature>
<feature type="binding site" evidence="1">
    <location>
        <position position="70"/>
    </location>
    <ligand>
        <name>Mg(2+)</name>
        <dbReference type="ChEBI" id="CHEBI:18420"/>
    </ligand>
</feature>
<feature type="binding site" evidence="1">
    <location>
        <position position="71"/>
    </location>
    <ligand>
        <name>ATP</name>
        <dbReference type="ChEBI" id="CHEBI:30616"/>
    </ligand>
</feature>
<feature type="binding site" evidence="1">
    <location>
        <begin position="132"/>
        <end position="134"/>
    </location>
    <ligand>
        <name>ATP</name>
        <dbReference type="ChEBI" id="CHEBI:30616"/>
    </ligand>
</feature>
<feature type="binding site" evidence="1">
    <location>
        <position position="175"/>
    </location>
    <ligand>
        <name>ATP</name>
        <dbReference type="ChEBI" id="CHEBI:30616"/>
    </ligand>
</feature>
<feature type="binding site" evidence="1">
    <location>
        <position position="185"/>
    </location>
    <ligand>
        <name>ATP</name>
        <dbReference type="ChEBI" id="CHEBI:30616"/>
    </ligand>
</feature>
<feature type="binding site" evidence="1">
    <location>
        <position position="222"/>
    </location>
    <ligand>
        <name>ATP</name>
        <dbReference type="ChEBI" id="CHEBI:30616"/>
    </ligand>
</feature>
<feature type="binding site" evidence="1">
    <location>
        <position position="295"/>
    </location>
    <ligand>
        <name>DNA</name>
        <dbReference type="ChEBI" id="CHEBI:16991"/>
    </ligand>
</feature>
<feature type="binding site" evidence="1">
    <location>
        <position position="314"/>
    </location>
    <ligand>
        <name>DNA</name>
        <dbReference type="ChEBI" id="CHEBI:16991"/>
    </ligand>
</feature>
<feature type="binding site" evidence="1">
    <location>
        <position position="319"/>
    </location>
    <ligand>
        <name>DNA</name>
        <dbReference type="ChEBI" id="CHEBI:16991"/>
    </ligand>
</feature>
<evidence type="ECO:0000255" key="1">
    <source>
        <dbReference type="HAMAP-Rule" id="MF_00016"/>
    </source>
</evidence>
<accession>Q4K7D9</accession>
<gene>
    <name evidence="1" type="primary">ruvB</name>
    <name type="ordered locus">PFL_4763</name>
</gene>
<sequence>MIEADRLIAATGPREREEIQDRAIRPVSLADYIGQPSVREQMELFIQAARGRNESLDHTLIFGPPGLGKTTLANIIAEEMGVSIKSTSGPVLERPGDLAALLTNLEPHDVLFIDEIHRLSPIVEEVLYPAMEDFQLDIMIGEGPAARSIKLDLPPFTLVGATTRAGMLTNPLRDRFGIVQRLEFYSTADLATIVSRSAGILGLPLDPEGAFEVARRARGTPRIANRLLRRVRDFAEVRAKGHITKPIADLALNLLDVDERGFDHQDRRLLLTMIEKFDGGPVGVDSLAAAISEERHTIEDVLEPYLIQQGYIMRTPRGRVVTRHAYLHFGLNIPSRMGDMPVVDEFLDAVDD</sequence>
<proteinExistence type="inferred from homology"/>
<dbReference type="EC" id="3.6.4.-" evidence="1"/>
<dbReference type="EMBL" id="CP000076">
    <property type="protein sequence ID" value="AAY93993.1"/>
    <property type="molecule type" value="Genomic_DNA"/>
</dbReference>
<dbReference type="RefSeq" id="WP_011063018.1">
    <property type="nucleotide sequence ID" value="NC_004129.6"/>
</dbReference>
<dbReference type="SMR" id="Q4K7D9"/>
<dbReference type="STRING" id="220664.PFL_4763"/>
<dbReference type="GeneID" id="57477743"/>
<dbReference type="KEGG" id="pfl:PFL_4763"/>
<dbReference type="PATRIC" id="fig|220664.5.peg.4873"/>
<dbReference type="eggNOG" id="COG2255">
    <property type="taxonomic scope" value="Bacteria"/>
</dbReference>
<dbReference type="HOGENOM" id="CLU_055599_1_0_6"/>
<dbReference type="Proteomes" id="UP000008540">
    <property type="component" value="Chromosome"/>
</dbReference>
<dbReference type="GO" id="GO:0005737">
    <property type="term" value="C:cytoplasm"/>
    <property type="evidence" value="ECO:0007669"/>
    <property type="project" value="UniProtKB-SubCell"/>
</dbReference>
<dbReference type="GO" id="GO:0048476">
    <property type="term" value="C:Holliday junction resolvase complex"/>
    <property type="evidence" value="ECO:0007669"/>
    <property type="project" value="UniProtKB-UniRule"/>
</dbReference>
<dbReference type="GO" id="GO:0005524">
    <property type="term" value="F:ATP binding"/>
    <property type="evidence" value="ECO:0007669"/>
    <property type="project" value="UniProtKB-UniRule"/>
</dbReference>
<dbReference type="GO" id="GO:0016887">
    <property type="term" value="F:ATP hydrolysis activity"/>
    <property type="evidence" value="ECO:0007669"/>
    <property type="project" value="InterPro"/>
</dbReference>
<dbReference type="GO" id="GO:0000400">
    <property type="term" value="F:four-way junction DNA binding"/>
    <property type="evidence" value="ECO:0007669"/>
    <property type="project" value="UniProtKB-UniRule"/>
</dbReference>
<dbReference type="GO" id="GO:0009378">
    <property type="term" value="F:four-way junction helicase activity"/>
    <property type="evidence" value="ECO:0007669"/>
    <property type="project" value="InterPro"/>
</dbReference>
<dbReference type="GO" id="GO:0006310">
    <property type="term" value="P:DNA recombination"/>
    <property type="evidence" value="ECO:0007669"/>
    <property type="project" value="UniProtKB-UniRule"/>
</dbReference>
<dbReference type="GO" id="GO:0006281">
    <property type="term" value="P:DNA repair"/>
    <property type="evidence" value="ECO:0007669"/>
    <property type="project" value="UniProtKB-UniRule"/>
</dbReference>
<dbReference type="CDD" id="cd00009">
    <property type="entry name" value="AAA"/>
    <property type="match status" value="1"/>
</dbReference>
<dbReference type="FunFam" id="1.10.10.10:FF:000086">
    <property type="entry name" value="Holliday junction ATP-dependent DNA helicase RuvB"/>
    <property type="match status" value="1"/>
</dbReference>
<dbReference type="FunFam" id="1.10.8.60:FF:000023">
    <property type="entry name" value="Holliday junction ATP-dependent DNA helicase RuvB"/>
    <property type="match status" value="1"/>
</dbReference>
<dbReference type="FunFam" id="3.40.50.300:FF:000073">
    <property type="entry name" value="Holliday junction ATP-dependent DNA helicase RuvB"/>
    <property type="match status" value="1"/>
</dbReference>
<dbReference type="Gene3D" id="1.10.8.60">
    <property type="match status" value="1"/>
</dbReference>
<dbReference type="Gene3D" id="3.40.50.300">
    <property type="entry name" value="P-loop containing nucleotide triphosphate hydrolases"/>
    <property type="match status" value="1"/>
</dbReference>
<dbReference type="Gene3D" id="1.10.10.10">
    <property type="entry name" value="Winged helix-like DNA-binding domain superfamily/Winged helix DNA-binding domain"/>
    <property type="match status" value="1"/>
</dbReference>
<dbReference type="HAMAP" id="MF_00016">
    <property type="entry name" value="DNA_HJ_migration_RuvB"/>
    <property type="match status" value="1"/>
</dbReference>
<dbReference type="InterPro" id="IPR003593">
    <property type="entry name" value="AAA+_ATPase"/>
</dbReference>
<dbReference type="InterPro" id="IPR041445">
    <property type="entry name" value="AAA_lid_4"/>
</dbReference>
<dbReference type="InterPro" id="IPR004605">
    <property type="entry name" value="DNA_helicase_Holl-junc_RuvB"/>
</dbReference>
<dbReference type="InterPro" id="IPR027417">
    <property type="entry name" value="P-loop_NTPase"/>
</dbReference>
<dbReference type="InterPro" id="IPR008824">
    <property type="entry name" value="RuvB-like_N"/>
</dbReference>
<dbReference type="InterPro" id="IPR008823">
    <property type="entry name" value="RuvB_C"/>
</dbReference>
<dbReference type="InterPro" id="IPR036388">
    <property type="entry name" value="WH-like_DNA-bd_sf"/>
</dbReference>
<dbReference type="InterPro" id="IPR036390">
    <property type="entry name" value="WH_DNA-bd_sf"/>
</dbReference>
<dbReference type="NCBIfam" id="NF000868">
    <property type="entry name" value="PRK00080.1"/>
    <property type="match status" value="1"/>
</dbReference>
<dbReference type="NCBIfam" id="TIGR00635">
    <property type="entry name" value="ruvB"/>
    <property type="match status" value="1"/>
</dbReference>
<dbReference type="PANTHER" id="PTHR42848">
    <property type="match status" value="1"/>
</dbReference>
<dbReference type="PANTHER" id="PTHR42848:SF1">
    <property type="entry name" value="HOLLIDAY JUNCTION BRANCH MIGRATION COMPLEX SUBUNIT RUVB"/>
    <property type="match status" value="1"/>
</dbReference>
<dbReference type="Pfam" id="PF17864">
    <property type="entry name" value="AAA_lid_4"/>
    <property type="match status" value="1"/>
</dbReference>
<dbReference type="Pfam" id="PF05491">
    <property type="entry name" value="RuvB_C"/>
    <property type="match status" value="1"/>
</dbReference>
<dbReference type="Pfam" id="PF05496">
    <property type="entry name" value="RuvB_N"/>
    <property type="match status" value="1"/>
</dbReference>
<dbReference type="SMART" id="SM00382">
    <property type="entry name" value="AAA"/>
    <property type="match status" value="1"/>
</dbReference>
<dbReference type="SUPFAM" id="SSF52540">
    <property type="entry name" value="P-loop containing nucleoside triphosphate hydrolases"/>
    <property type="match status" value="1"/>
</dbReference>
<dbReference type="SUPFAM" id="SSF46785">
    <property type="entry name" value="Winged helix' DNA-binding domain"/>
    <property type="match status" value="1"/>
</dbReference>
<keyword id="KW-0067">ATP-binding</keyword>
<keyword id="KW-0963">Cytoplasm</keyword>
<keyword id="KW-0227">DNA damage</keyword>
<keyword id="KW-0233">DNA recombination</keyword>
<keyword id="KW-0234">DNA repair</keyword>
<keyword id="KW-0238">DNA-binding</keyword>
<keyword id="KW-0378">Hydrolase</keyword>
<keyword id="KW-0547">Nucleotide-binding</keyword>
<reference key="1">
    <citation type="journal article" date="2005" name="Nat. Biotechnol.">
        <title>Complete genome sequence of the plant commensal Pseudomonas fluorescens Pf-5.</title>
        <authorList>
            <person name="Paulsen I.T."/>
            <person name="Press C.M."/>
            <person name="Ravel J."/>
            <person name="Kobayashi D.Y."/>
            <person name="Myers G.S.A."/>
            <person name="Mavrodi D.V."/>
            <person name="DeBoy R.T."/>
            <person name="Seshadri R."/>
            <person name="Ren Q."/>
            <person name="Madupu R."/>
            <person name="Dodson R.J."/>
            <person name="Durkin A.S."/>
            <person name="Brinkac L.M."/>
            <person name="Daugherty S.C."/>
            <person name="Sullivan S.A."/>
            <person name="Rosovitz M.J."/>
            <person name="Gwinn M.L."/>
            <person name="Zhou L."/>
            <person name="Schneider D.J."/>
            <person name="Cartinhour S.W."/>
            <person name="Nelson W.C."/>
            <person name="Weidman J."/>
            <person name="Watkins K."/>
            <person name="Tran K."/>
            <person name="Khouri H."/>
            <person name="Pierson E.A."/>
            <person name="Pierson L.S. III"/>
            <person name="Thomashow L.S."/>
            <person name="Loper J.E."/>
        </authorList>
    </citation>
    <scope>NUCLEOTIDE SEQUENCE [LARGE SCALE GENOMIC DNA]</scope>
    <source>
        <strain>ATCC BAA-477 / NRRL B-23932 / Pf-5</strain>
    </source>
</reference>
<name>RUVB_PSEF5</name>
<comment type="function">
    <text evidence="1">The RuvA-RuvB-RuvC complex processes Holliday junction (HJ) DNA during genetic recombination and DNA repair, while the RuvA-RuvB complex plays an important role in the rescue of blocked DNA replication forks via replication fork reversal (RFR). RuvA specifically binds to HJ cruciform DNA, conferring on it an open structure. The RuvB hexamer acts as an ATP-dependent pump, pulling dsDNA into and through the RuvAB complex. RuvB forms 2 homohexamers on either side of HJ DNA bound by 1 or 2 RuvA tetramers; 4 subunits per hexamer contact DNA at a time. Coordinated motions by a converter formed by DNA-disengaged RuvB subunits stimulates ATP hydrolysis and nucleotide exchange. Immobilization of the converter enables RuvB to convert the ATP-contained energy into a lever motion, pulling 2 nucleotides of DNA out of the RuvA tetramer per ATP hydrolyzed, thus driving DNA branch migration. The RuvB motors rotate together with the DNA substrate, which together with the progressing nucleotide cycle form the mechanistic basis for DNA recombination by continuous HJ branch migration. Branch migration allows RuvC to scan DNA until it finds its consensus sequence, where it cleaves and resolves cruciform DNA.</text>
</comment>
<comment type="catalytic activity">
    <reaction evidence="1">
        <text>ATP + H2O = ADP + phosphate + H(+)</text>
        <dbReference type="Rhea" id="RHEA:13065"/>
        <dbReference type="ChEBI" id="CHEBI:15377"/>
        <dbReference type="ChEBI" id="CHEBI:15378"/>
        <dbReference type="ChEBI" id="CHEBI:30616"/>
        <dbReference type="ChEBI" id="CHEBI:43474"/>
        <dbReference type="ChEBI" id="CHEBI:456216"/>
    </reaction>
</comment>
<comment type="subunit">
    <text evidence="1">Homohexamer. Forms an RuvA(8)-RuvB(12)-Holliday junction (HJ) complex. HJ DNA is sandwiched between 2 RuvA tetramers; dsDNA enters through RuvA and exits via RuvB. An RuvB hexamer assembles on each DNA strand where it exits the tetramer. Each RuvB hexamer is contacted by two RuvA subunits (via domain III) on 2 adjacent RuvB subunits; this complex drives branch migration. In the full resolvosome a probable DNA-RuvA(4)-RuvB(12)-RuvC(2) complex forms which resolves the HJ.</text>
</comment>
<comment type="subcellular location">
    <subcellularLocation>
        <location evidence="1">Cytoplasm</location>
    </subcellularLocation>
</comment>
<comment type="domain">
    <text evidence="1">Has 3 domains, the large (RuvB-L) and small ATPase (RuvB-S) domains and the C-terminal head (RuvB-H) domain. The head domain binds DNA, while the ATPase domains jointly bind ATP, ADP or are empty depending on the state of the subunit in the translocation cycle. During a single DNA translocation step the structure of each domain remains the same, but their relative positions change.</text>
</comment>
<comment type="similarity">
    <text evidence="1">Belongs to the RuvB family.</text>
</comment>
<protein>
    <recommendedName>
        <fullName evidence="1">Holliday junction branch migration complex subunit RuvB</fullName>
        <ecNumber evidence="1">3.6.4.-</ecNumber>
    </recommendedName>
</protein>
<organism>
    <name type="scientific">Pseudomonas fluorescens (strain ATCC BAA-477 / NRRL B-23932 / Pf-5)</name>
    <dbReference type="NCBI Taxonomy" id="220664"/>
    <lineage>
        <taxon>Bacteria</taxon>
        <taxon>Pseudomonadati</taxon>
        <taxon>Pseudomonadota</taxon>
        <taxon>Gammaproteobacteria</taxon>
        <taxon>Pseudomonadales</taxon>
        <taxon>Pseudomonadaceae</taxon>
        <taxon>Pseudomonas</taxon>
    </lineage>
</organism>